<gene>
    <name type="ORF">PGUG_00362</name>
</gene>
<feature type="chain" id="PRO_0000351113" description="DNA damage-binding protein CMR1">
    <location>
        <begin position="1"/>
        <end position="573"/>
    </location>
</feature>
<feature type="repeat" description="WD 1" evidence="2">
    <location>
        <begin position="218"/>
        <end position="259"/>
    </location>
</feature>
<feature type="repeat" description="WD 2" evidence="2">
    <location>
        <begin position="268"/>
        <end position="308"/>
    </location>
</feature>
<feature type="repeat" description="WD 3" evidence="2">
    <location>
        <begin position="319"/>
        <end position="357"/>
    </location>
</feature>
<feature type="repeat" description="WD 4" evidence="2">
    <location>
        <begin position="361"/>
        <end position="401"/>
    </location>
</feature>
<feature type="repeat" description="WD 5" evidence="2">
    <location>
        <begin position="418"/>
        <end position="456"/>
    </location>
</feature>
<feature type="repeat" description="WD 6" evidence="2">
    <location>
        <begin position="495"/>
        <end position="538"/>
    </location>
</feature>
<feature type="repeat" description="WD 7" evidence="2">
    <location>
        <begin position="542"/>
        <end position="573"/>
    </location>
</feature>
<feature type="region of interest" description="Disordered" evidence="3">
    <location>
        <begin position="27"/>
        <end position="94"/>
    </location>
</feature>
<feature type="coiled-coil region" evidence="2">
    <location>
        <begin position="72"/>
        <end position="152"/>
    </location>
</feature>
<feature type="compositionally biased region" description="Basic and acidic residues" evidence="3">
    <location>
        <begin position="79"/>
        <end position="94"/>
    </location>
</feature>
<reference key="1">
    <citation type="journal article" date="2009" name="Nature">
        <title>Evolution of pathogenicity and sexual reproduction in eight Candida genomes.</title>
        <authorList>
            <person name="Butler G."/>
            <person name="Rasmussen M.D."/>
            <person name="Lin M.F."/>
            <person name="Santos M.A.S."/>
            <person name="Sakthikumar S."/>
            <person name="Munro C.A."/>
            <person name="Rheinbay E."/>
            <person name="Grabherr M."/>
            <person name="Forche A."/>
            <person name="Reedy J.L."/>
            <person name="Agrafioti I."/>
            <person name="Arnaud M.B."/>
            <person name="Bates S."/>
            <person name="Brown A.J.P."/>
            <person name="Brunke S."/>
            <person name="Costanzo M.C."/>
            <person name="Fitzpatrick D.A."/>
            <person name="de Groot P.W.J."/>
            <person name="Harris D."/>
            <person name="Hoyer L.L."/>
            <person name="Hube B."/>
            <person name="Klis F.M."/>
            <person name="Kodira C."/>
            <person name="Lennard N."/>
            <person name="Logue M.E."/>
            <person name="Martin R."/>
            <person name="Neiman A.M."/>
            <person name="Nikolaou E."/>
            <person name="Quail M.A."/>
            <person name="Quinn J."/>
            <person name="Santos M.C."/>
            <person name="Schmitzberger F.F."/>
            <person name="Sherlock G."/>
            <person name="Shah P."/>
            <person name="Silverstein K.A.T."/>
            <person name="Skrzypek M.S."/>
            <person name="Soll D."/>
            <person name="Staggs R."/>
            <person name="Stansfield I."/>
            <person name="Stumpf M.P.H."/>
            <person name="Sudbery P.E."/>
            <person name="Srikantha T."/>
            <person name="Zeng Q."/>
            <person name="Berman J."/>
            <person name="Berriman M."/>
            <person name="Heitman J."/>
            <person name="Gow N.A.R."/>
            <person name="Lorenz M.C."/>
            <person name="Birren B.W."/>
            <person name="Kellis M."/>
            <person name="Cuomo C.A."/>
        </authorList>
    </citation>
    <scope>NUCLEOTIDE SEQUENCE [LARGE SCALE GENOMIC DNA]</scope>
    <source>
        <strain>ATCC 6260 / CBS 566 / DSM 6381 / JCM 1539 / NBRC 10279 / NRRL Y-324</strain>
    </source>
</reference>
<protein>
    <recommendedName>
        <fullName evidence="1">DNA damage-binding protein CMR1</fullName>
    </recommendedName>
</protein>
<keyword id="KW-0175">Coiled coil</keyword>
<keyword id="KW-0227">DNA damage</keyword>
<keyword id="KW-0238">DNA-binding</keyword>
<keyword id="KW-1185">Reference proteome</keyword>
<keyword id="KW-0677">Repeat</keyword>
<keyword id="KW-0853">WD repeat</keyword>
<organism>
    <name type="scientific">Meyerozyma guilliermondii (strain ATCC 6260 / CBS 566 / DSM 6381 / JCM 1539 / NBRC 10279 / NRRL Y-324)</name>
    <name type="common">Yeast</name>
    <name type="synonym">Candida guilliermondii</name>
    <dbReference type="NCBI Taxonomy" id="294746"/>
    <lineage>
        <taxon>Eukaryota</taxon>
        <taxon>Fungi</taxon>
        <taxon>Dikarya</taxon>
        <taxon>Ascomycota</taxon>
        <taxon>Saccharomycotina</taxon>
        <taxon>Pichiomycetes</taxon>
        <taxon>Debaryomycetaceae</taxon>
        <taxon>Meyerozyma</taxon>
    </lineage>
</organism>
<dbReference type="EMBL" id="CH408155">
    <property type="protein sequence ID" value="EDK36264.2"/>
    <property type="molecule type" value="Genomic_DNA"/>
</dbReference>
<dbReference type="RefSeq" id="XP_001486985.2">
    <property type="nucleotide sequence ID" value="XM_001486935.1"/>
</dbReference>
<dbReference type="SMR" id="A5DAQ7"/>
<dbReference type="FunCoup" id="A5DAQ7">
    <property type="interactions" value="755"/>
</dbReference>
<dbReference type="STRING" id="294746.A5DAQ7"/>
<dbReference type="GeneID" id="5129228"/>
<dbReference type="KEGG" id="pgu:PGUG_00362"/>
<dbReference type="VEuPathDB" id="FungiDB:PGUG_00362"/>
<dbReference type="eggNOG" id="KOG4328">
    <property type="taxonomic scope" value="Eukaryota"/>
</dbReference>
<dbReference type="HOGENOM" id="CLU_017019_1_1_1"/>
<dbReference type="InParanoid" id="A5DAQ7"/>
<dbReference type="OMA" id="DPNTLYW"/>
<dbReference type="OrthoDB" id="9890280at2759"/>
<dbReference type="Proteomes" id="UP000001997">
    <property type="component" value="Unassembled WGS sequence"/>
</dbReference>
<dbReference type="GO" id="GO:0000785">
    <property type="term" value="C:chromatin"/>
    <property type="evidence" value="ECO:0007669"/>
    <property type="project" value="EnsemblFungi"/>
</dbReference>
<dbReference type="GO" id="GO:0005737">
    <property type="term" value="C:cytoplasm"/>
    <property type="evidence" value="ECO:0007669"/>
    <property type="project" value="EnsemblFungi"/>
</dbReference>
<dbReference type="GO" id="GO:0034399">
    <property type="term" value="C:nuclear periphery"/>
    <property type="evidence" value="ECO:0007669"/>
    <property type="project" value="EnsemblFungi"/>
</dbReference>
<dbReference type="GO" id="GO:0003677">
    <property type="term" value="F:DNA binding"/>
    <property type="evidence" value="ECO:0007669"/>
    <property type="project" value="UniProtKB-KW"/>
</dbReference>
<dbReference type="GO" id="GO:0006974">
    <property type="term" value="P:DNA damage response"/>
    <property type="evidence" value="ECO:0007669"/>
    <property type="project" value="UniProtKB-KW"/>
</dbReference>
<dbReference type="GO" id="GO:2000001">
    <property type="term" value="P:regulation of DNA damage checkpoint"/>
    <property type="evidence" value="ECO:0007669"/>
    <property type="project" value="EnsemblFungi"/>
</dbReference>
<dbReference type="Gene3D" id="2.130.10.10">
    <property type="entry name" value="YVTN repeat-like/Quinoprotein amine dehydrogenase"/>
    <property type="match status" value="1"/>
</dbReference>
<dbReference type="InterPro" id="IPR015943">
    <property type="entry name" value="WD40/YVTN_repeat-like_dom_sf"/>
</dbReference>
<dbReference type="InterPro" id="IPR019775">
    <property type="entry name" value="WD40_repeat_CS"/>
</dbReference>
<dbReference type="InterPro" id="IPR036322">
    <property type="entry name" value="WD40_repeat_dom_sf"/>
</dbReference>
<dbReference type="InterPro" id="IPR001680">
    <property type="entry name" value="WD40_rpt"/>
</dbReference>
<dbReference type="InterPro" id="IPR050853">
    <property type="entry name" value="WD_repeat_DNA-damage-binding"/>
</dbReference>
<dbReference type="PANTHER" id="PTHR14773">
    <property type="entry name" value="WD REPEAT-CONTAINING PROTEIN 76"/>
    <property type="match status" value="1"/>
</dbReference>
<dbReference type="PANTHER" id="PTHR14773:SF0">
    <property type="entry name" value="WD REPEAT-CONTAINING PROTEIN 76"/>
    <property type="match status" value="1"/>
</dbReference>
<dbReference type="Pfam" id="PF00400">
    <property type="entry name" value="WD40"/>
    <property type="match status" value="2"/>
</dbReference>
<dbReference type="SMART" id="SM00320">
    <property type="entry name" value="WD40"/>
    <property type="match status" value="5"/>
</dbReference>
<dbReference type="SUPFAM" id="SSF50978">
    <property type="entry name" value="WD40 repeat-like"/>
    <property type="match status" value="1"/>
</dbReference>
<dbReference type="PROSITE" id="PS00678">
    <property type="entry name" value="WD_REPEATS_1"/>
    <property type="match status" value="1"/>
</dbReference>
<dbReference type="PROSITE" id="PS50082">
    <property type="entry name" value="WD_REPEATS_2"/>
    <property type="match status" value="1"/>
</dbReference>
<dbReference type="PROSITE" id="PS50294">
    <property type="entry name" value="WD_REPEATS_REGION"/>
    <property type="match status" value="1"/>
</dbReference>
<sequence>MTLSDFEKQRQENIQRNKELLRQLELDSLNDSISREVPKPKPKAKRRKTENARVKTEPIMPSRRSRRLAGSTMEDSEEDKQMREEMEKAEERKRELEKLKSTRLFGDFKLIDLVVNKQGEFKNQDKILKAKEKDNEIKKEEKEEIKKEEDSTDSIDLSRDNEVLQKLQQLGDRFSAGDFYEMIKDTKSKYDDTVLQEKREEFDRVKLYERFDPLDIKITQQRITSIAFHPAKDDRVVVAGDTTGYVGIWAVDAKGDDETSPHITILKPHGKAVARILTPEQQPSSILTCSYDGSVRRLDLKRLESTEVAYLQDPYESSDYPLGVSDINVADNNLLYMTTLSGNFYRYDMRSPFKQGELLRLHDKKIGSFSINPNAFHQIATASLDRTMKLWDLRNISQKNSYWSEFDDKSPHLYCTYHSRLSVSCVDWNHDNHLVCNGYDDTVNVFDLSGSDKLPLVTEWSKDYETEKKKRTTIEDGVPEKLEALTRIKHNCQTGRWVSILKSKWQLHPADGLQKFVIANMNRAFDIYDQKGRILCHLTDPDRMTAVPAVSMLHPTENWCVGGSASGKVYLFE</sequence>
<name>CMR1_PICGU</name>
<evidence type="ECO:0000250" key="1">
    <source>
        <dbReference type="UniProtKB" id="Q12510"/>
    </source>
</evidence>
<evidence type="ECO:0000255" key="2"/>
<evidence type="ECO:0000256" key="3">
    <source>
        <dbReference type="SAM" id="MobiDB-lite"/>
    </source>
</evidence>
<evidence type="ECO:0000305" key="4"/>
<proteinExistence type="inferred from homology"/>
<comment type="function">
    <text evidence="1">DNA-binding protein that binds to both single- and double-stranded DNA. Binds preferentially to UV-damaged DNA. May be involved in DNA-metabolic processes.</text>
</comment>
<comment type="similarity">
    <text evidence="4">Belongs to the WD repeat DDB2/WDR76 family.</text>
</comment>
<accession>A5DAQ7</accession>